<name>RPOA_BRASB</name>
<gene>
    <name evidence="1" type="primary">rpoA</name>
    <name type="ordered locus">BBta_5046</name>
</gene>
<keyword id="KW-0240">DNA-directed RNA polymerase</keyword>
<keyword id="KW-0548">Nucleotidyltransferase</keyword>
<keyword id="KW-1185">Reference proteome</keyword>
<keyword id="KW-0804">Transcription</keyword>
<keyword id="KW-0808">Transferase</keyword>
<proteinExistence type="inferred from homology"/>
<comment type="function">
    <text evidence="1">DNA-dependent RNA polymerase catalyzes the transcription of DNA into RNA using the four ribonucleoside triphosphates as substrates.</text>
</comment>
<comment type="catalytic activity">
    <reaction evidence="1">
        <text>RNA(n) + a ribonucleoside 5'-triphosphate = RNA(n+1) + diphosphate</text>
        <dbReference type="Rhea" id="RHEA:21248"/>
        <dbReference type="Rhea" id="RHEA-COMP:14527"/>
        <dbReference type="Rhea" id="RHEA-COMP:17342"/>
        <dbReference type="ChEBI" id="CHEBI:33019"/>
        <dbReference type="ChEBI" id="CHEBI:61557"/>
        <dbReference type="ChEBI" id="CHEBI:140395"/>
        <dbReference type="EC" id="2.7.7.6"/>
    </reaction>
</comment>
<comment type="subunit">
    <text evidence="1">Homodimer. The RNAP catalytic core consists of 2 alpha, 1 beta, 1 beta' and 1 omega subunit. When a sigma factor is associated with the core the holoenzyme is formed, which can initiate transcription.</text>
</comment>
<comment type="domain">
    <text evidence="1">The N-terminal domain is essential for RNAP assembly and basal transcription, whereas the C-terminal domain is involved in interaction with transcriptional regulators and with upstream promoter elements.</text>
</comment>
<comment type="similarity">
    <text evidence="1">Belongs to the RNA polymerase alpha chain family.</text>
</comment>
<reference key="1">
    <citation type="journal article" date="2007" name="Science">
        <title>Legumes symbioses: absence of nod genes in photosynthetic bradyrhizobia.</title>
        <authorList>
            <person name="Giraud E."/>
            <person name="Moulin L."/>
            <person name="Vallenet D."/>
            <person name="Barbe V."/>
            <person name="Cytryn E."/>
            <person name="Avarre J.-C."/>
            <person name="Jaubert M."/>
            <person name="Simon D."/>
            <person name="Cartieaux F."/>
            <person name="Prin Y."/>
            <person name="Bena G."/>
            <person name="Hannibal L."/>
            <person name="Fardoux J."/>
            <person name="Kojadinovic M."/>
            <person name="Vuillet L."/>
            <person name="Lajus A."/>
            <person name="Cruveiller S."/>
            <person name="Rouy Z."/>
            <person name="Mangenot S."/>
            <person name="Segurens B."/>
            <person name="Dossat C."/>
            <person name="Franck W.L."/>
            <person name="Chang W.-S."/>
            <person name="Saunders E."/>
            <person name="Bruce D."/>
            <person name="Richardson P."/>
            <person name="Normand P."/>
            <person name="Dreyfus B."/>
            <person name="Pignol D."/>
            <person name="Stacey G."/>
            <person name="Emerich D."/>
            <person name="Vermeglio A."/>
            <person name="Medigue C."/>
            <person name="Sadowsky M."/>
        </authorList>
    </citation>
    <scope>NUCLEOTIDE SEQUENCE [LARGE SCALE GENOMIC DNA]</scope>
    <source>
        <strain>BTAi1 / ATCC BAA-1182</strain>
    </source>
</reference>
<accession>A5ELK3</accession>
<evidence type="ECO:0000255" key="1">
    <source>
        <dbReference type="HAMAP-Rule" id="MF_00059"/>
    </source>
</evidence>
<organism>
    <name type="scientific">Bradyrhizobium sp. (strain BTAi1 / ATCC BAA-1182)</name>
    <dbReference type="NCBI Taxonomy" id="288000"/>
    <lineage>
        <taxon>Bacteria</taxon>
        <taxon>Pseudomonadati</taxon>
        <taxon>Pseudomonadota</taxon>
        <taxon>Alphaproteobacteria</taxon>
        <taxon>Hyphomicrobiales</taxon>
        <taxon>Nitrobacteraceae</taxon>
        <taxon>Bradyrhizobium</taxon>
    </lineage>
</organism>
<feature type="chain" id="PRO_0000296785" description="DNA-directed RNA polymerase subunit alpha">
    <location>
        <begin position="1"/>
        <end position="343"/>
    </location>
</feature>
<feature type="region of interest" description="Alpha N-terminal domain (alpha-NTD)" evidence="1">
    <location>
        <begin position="1"/>
        <end position="239"/>
    </location>
</feature>
<feature type="region of interest" description="Alpha C-terminal domain (alpha-CTD)" evidence="1">
    <location>
        <begin position="255"/>
        <end position="343"/>
    </location>
</feature>
<protein>
    <recommendedName>
        <fullName evidence="1">DNA-directed RNA polymerase subunit alpha</fullName>
        <shortName evidence="1">RNAP subunit alpha</shortName>
        <ecNumber evidence="1">2.7.7.6</ecNumber>
    </recommendedName>
    <alternativeName>
        <fullName evidence="1">RNA polymerase subunit alpha</fullName>
    </alternativeName>
    <alternativeName>
        <fullName evidence="1">Transcriptase subunit alpha</fullName>
    </alternativeName>
</protein>
<sequence length="343" mass="37916">MGETVTIQKNWQELIRPNKLQVTPGSDATRFATVVAEPLERGFGQTLGNALRRILLSSLQGAAVQSVHIDGVLHEFSSIAGVREDVTDIVLNIKDISIKMQGEGPKRMVVKKQGPGAVTAGDIQTVGDIVVLNPDLQLCTLDEGAEIRMEFTVATGKGYVPAERNRPEDAPIGLIPIDSLFSPVRKVSYKVENTREGQILDYDKLTMTIETNGAISPEDAVAYAARILQDQLNVFVNFEEPRKEVAQEIIPDLAFNPAFLKKVDELELSVRSANCLKNDNIVYIGDLVQKSEAEMLRTPNFGRKSLNEIKEVLAQMGLHLGMEVPGWPPENIDELAKRFEDHY</sequence>
<dbReference type="EC" id="2.7.7.6" evidence="1"/>
<dbReference type="EMBL" id="CP000494">
    <property type="protein sequence ID" value="ABQ37047.1"/>
    <property type="molecule type" value="Genomic_DNA"/>
</dbReference>
<dbReference type="RefSeq" id="WP_011926060.1">
    <property type="nucleotide sequence ID" value="NC_009485.1"/>
</dbReference>
<dbReference type="SMR" id="A5ELK3"/>
<dbReference type="STRING" id="288000.BBta_5046"/>
<dbReference type="KEGG" id="bbt:BBta_5046"/>
<dbReference type="eggNOG" id="COG0202">
    <property type="taxonomic scope" value="Bacteria"/>
</dbReference>
<dbReference type="HOGENOM" id="CLU_053084_0_0_5"/>
<dbReference type="OrthoDB" id="9805706at2"/>
<dbReference type="Proteomes" id="UP000000246">
    <property type="component" value="Chromosome"/>
</dbReference>
<dbReference type="GO" id="GO:0005737">
    <property type="term" value="C:cytoplasm"/>
    <property type="evidence" value="ECO:0007669"/>
    <property type="project" value="UniProtKB-ARBA"/>
</dbReference>
<dbReference type="GO" id="GO:0000428">
    <property type="term" value="C:DNA-directed RNA polymerase complex"/>
    <property type="evidence" value="ECO:0007669"/>
    <property type="project" value="UniProtKB-KW"/>
</dbReference>
<dbReference type="GO" id="GO:0003677">
    <property type="term" value="F:DNA binding"/>
    <property type="evidence" value="ECO:0007669"/>
    <property type="project" value="UniProtKB-UniRule"/>
</dbReference>
<dbReference type="GO" id="GO:0003899">
    <property type="term" value="F:DNA-directed RNA polymerase activity"/>
    <property type="evidence" value="ECO:0007669"/>
    <property type="project" value="UniProtKB-UniRule"/>
</dbReference>
<dbReference type="GO" id="GO:0046983">
    <property type="term" value="F:protein dimerization activity"/>
    <property type="evidence" value="ECO:0007669"/>
    <property type="project" value="InterPro"/>
</dbReference>
<dbReference type="GO" id="GO:0006351">
    <property type="term" value="P:DNA-templated transcription"/>
    <property type="evidence" value="ECO:0007669"/>
    <property type="project" value="UniProtKB-UniRule"/>
</dbReference>
<dbReference type="CDD" id="cd06928">
    <property type="entry name" value="RNAP_alpha_NTD"/>
    <property type="match status" value="1"/>
</dbReference>
<dbReference type="FunFam" id="1.10.150.20:FF:000001">
    <property type="entry name" value="DNA-directed RNA polymerase subunit alpha"/>
    <property type="match status" value="1"/>
</dbReference>
<dbReference type="FunFam" id="2.170.120.12:FF:000001">
    <property type="entry name" value="DNA-directed RNA polymerase subunit alpha"/>
    <property type="match status" value="1"/>
</dbReference>
<dbReference type="Gene3D" id="1.10.150.20">
    <property type="entry name" value="5' to 3' exonuclease, C-terminal subdomain"/>
    <property type="match status" value="1"/>
</dbReference>
<dbReference type="Gene3D" id="2.170.120.12">
    <property type="entry name" value="DNA-directed RNA polymerase, insert domain"/>
    <property type="match status" value="1"/>
</dbReference>
<dbReference type="Gene3D" id="3.30.1360.10">
    <property type="entry name" value="RNA polymerase, RBP11-like subunit"/>
    <property type="match status" value="1"/>
</dbReference>
<dbReference type="HAMAP" id="MF_00059">
    <property type="entry name" value="RNApol_bact_RpoA"/>
    <property type="match status" value="1"/>
</dbReference>
<dbReference type="InterPro" id="IPR011262">
    <property type="entry name" value="DNA-dir_RNA_pol_insert"/>
</dbReference>
<dbReference type="InterPro" id="IPR011263">
    <property type="entry name" value="DNA-dir_RNA_pol_RpoA/D/Rpb3"/>
</dbReference>
<dbReference type="InterPro" id="IPR011773">
    <property type="entry name" value="DNA-dir_RpoA"/>
</dbReference>
<dbReference type="InterPro" id="IPR036603">
    <property type="entry name" value="RBP11-like"/>
</dbReference>
<dbReference type="InterPro" id="IPR011260">
    <property type="entry name" value="RNAP_asu_C"/>
</dbReference>
<dbReference type="InterPro" id="IPR036643">
    <property type="entry name" value="RNApol_insert_sf"/>
</dbReference>
<dbReference type="NCBIfam" id="NF003513">
    <property type="entry name" value="PRK05182.1-2"/>
    <property type="match status" value="1"/>
</dbReference>
<dbReference type="NCBIfam" id="NF003519">
    <property type="entry name" value="PRK05182.2-5"/>
    <property type="match status" value="1"/>
</dbReference>
<dbReference type="NCBIfam" id="TIGR02027">
    <property type="entry name" value="rpoA"/>
    <property type="match status" value="1"/>
</dbReference>
<dbReference type="Pfam" id="PF01000">
    <property type="entry name" value="RNA_pol_A_bac"/>
    <property type="match status" value="1"/>
</dbReference>
<dbReference type="Pfam" id="PF03118">
    <property type="entry name" value="RNA_pol_A_CTD"/>
    <property type="match status" value="1"/>
</dbReference>
<dbReference type="Pfam" id="PF01193">
    <property type="entry name" value="RNA_pol_L"/>
    <property type="match status" value="1"/>
</dbReference>
<dbReference type="SMART" id="SM00662">
    <property type="entry name" value="RPOLD"/>
    <property type="match status" value="1"/>
</dbReference>
<dbReference type="SUPFAM" id="SSF47789">
    <property type="entry name" value="C-terminal domain of RNA polymerase alpha subunit"/>
    <property type="match status" value="1"/>
</dbReference>
<dbReference type="SUPFAM" id="SSF56553">
    <property type="entry name" value="Insert subdomain of RNA polymerase alpha subunit"/>
    <property type="match status" value="1"/>
</dbReference>
<dbReference type="SUPFAM" id="SSF55257">
    <property type="entry name" value="RBP11-like subunits of RNA polymerase"/>
    <property type="match status" value="1"/>
</dbReference>